<keyword id="KW-0479">Metal-binding</keyword>
<keyword id="KW-0687">Ribonucleoprotein</keyword>
<keyword id="KW-0689">Ribosomal protein</keyword>
<keyword id="KW-0694">RNA-binding</keyword>
<keyword id="KW-0699">rRNA-binding</keyword>
<keyword id="KW-0862">Zinc</keyword>
<feature type="chain" id="PRO_1000126698" description="Large ribosomal subunit protein bL31">
    <location>
        <begin position="1"/>
        <end position="71"/>
    </location>
</feature>
<feature type="binding site" evidence="1">
    <location>
        <position position="16"/>
    </location>
    <ligand>
        <name>Zn(2+)</name>
        <dbReference type="ChEBI" id="CHEBI:29105"/>
    </ligand>
</feature>
<feature type="binding site" evidence="1">
    <location>
        <position position="18"/>
    </location>
    <ligand>
        <name>Zn(2+)</name>
        <dbReference type="ChEBI" id="CHEBI:29105"/>
    </ligand>
</feature>
<feature type="binding site" evidence="1">
    <location>
        <position position="37"/>
    </location>
    <ligand>
        <name>Zn(2+)</name>
        <dbReference type="ChEBI" id="CHEBI:29105"/>
    </ligand>
</feature>
<feature type="binding site" evidence="1">
    <location>
        <position position="40"/>
    </location>
    <ligand>
        <name>Zn(2+)</name>
        <dbReference type="ChEBI" id="CHEBI:29105"/>
    </ligand>
</feature>
<evidence type="ECO:0000255" key="1">
    <source>
        <dbReference type="HAMAP-Rule" id="MF_00501"/>
    </source>
</evidence>
<evidence type="ECO:0000305" key="2"/>
<protein>
    <recommendedName>
        <fullName evidence="1">Large ribosomal subunit protein bL31</fullName>
    </recommendedName>
    <alternativeName>
        <fullName evidence="2">50S ribosomal protein L31</fullName>
    </alternativeName>
</protein>
<accession>B7V3E2</accession>
<reference key="1">
    <citation type="journal article" date="2009" name="Genome Res.">
        <title>Newly introduced genomic prophage islands are critical determinants of in vivo competitiveness in the Liverpool epidemic strain of Pseudomonas aeruginosa.</title>
        <authorList>
            <person name="Winstanley C."/>
            <person name="Langille M.G.I."/>
            <person name="Fothergill J.L."/>
            <person name="Kukavica-Ibrulj I."/>
            <person name="Paradis-Bleau C."/>
            <person name="Sanschagrin F."/>
            <person name="Thomson N.R."/>
            <person name="Winsor G.L."/>
            <person name="Quail M.A."/>
            <person name="Lennard N."/>
            <person name="Bignell A."/>
            <person name="Clarke L."/>
            <person name="Seeger K."/>
            <person name="Saunders D."/>
            <person name="Harris D."/>
            <person name="Parkhill J."/>
            <person name="Hancock R.E.W."/>
            <person name="Brinkman F.S.L."/>
            <person name="Levesque R.C."/>
        </authorList>
    </citation>
    <scope>NUCLEOTIDE SEQUENCE [LARGE SCALE GENOMIC DNA]</scope>
    <source>
        <strain>LESB58</strain>
    </source>
</reference>
<name>RL31_PSEA8</name>
<organism>
    <name type="scientific">Pseudomonas aeruginosa (strain LESB58)</name>
    <dbReference type="NCBI Taxonomy" id="557722"/>
    <lineage>
        <taxon>Bacteria</taxon>
        <taxon>Pseudomonadati</taxon>
        <taxon>Pseudomonadota</taxon>
        <taxon>Gammaproteobacteria</taxon>
        <taxon>Pseudomonadales</taxon>
        <taxon>Pseudomonadaceae</taxon>
        <taxon>Pseudomonas</taxon>
    </lineage>
</organism>
<dbReference type="EMBL" id="FM209186">
    <property type="protein sequence ID" value="CAW30193.1"/>
    <property type="molecule type" value="Genomic_DNA"/>
</dbReference>
<dbReference type="RefSeq" id="WP_003095846.1">
    <property type="nucleotide sequence ID" value="NC_011770.1"/>
</dbReference>
<dbReference type="SMR" id="B7V3E2"/>
<dbReference type="KEGG" id="pag:PLES_54391"/>
<dbReference type="HOGENOM" id="CLU_114306_4_3_6"/>
<dbReference type="GO" id="GO:1990904">
    <property type="term" value="C:ribonucleoprotein complex"/>
    <property type="evidence" value="ECO:0007669"/>
    <property type="project" value="UniProtKB-KW"/>
</dbReference>
<dbReference type="GO" id="GO:0005840">
    <property type="term" value="C:ribosome"/>
    <property type="evidence" value="ECO:0007669"/>
    <property type="project" value="UniProtKB-KW"/>
</dbReference>
<dbReference type="GO" id="GO:0046872">
    <property type="term" value="F:metal ion binding"/>
    <property type="evidence" value="ECO:0007669"/>
    <property type="project" value="UniProtKB-KW"/>
</dbReference>
<dbReference type="GO" id="GO:0019843">
    <property type="term" value="F:rRNA binding"/>
    <property type="evidence" value="ECO:0007669"/>
    <property type="project" value="UniProtKB-KW"/>
</dbReference>
<dbReference type="GO" id="GO:0003735">
    <property type="term" value="F:structural constituent of ribosome"/>
    <property type="evidence" value="ECO:0007669"/>
    <property type="project" value="InterPro"/>
</dbReference>
<dbReference type="GO" id="GO:0006412">
    <property type="term" value="P:translation"/>
    <property type="evidence" value="ECO:0007669"/>
    <property type="project" value="UniProtKB-UniRule"/>
</dbReference>
<dbReference type="Gene3D" id="4.10.830.30">
    <property type="entry name" value="Ribosomal protein L31"/>
    <property type="match status" value="1"/>
</dbReference>
<dbReference type="HAMAP" id="MF_00501">
    <property type="entry name" value="Ribosomal_bL31_1"/>
    <property type="match status" value="1"/>
</dbReference>
<dbReference type="InterPro" id="IPR034704">
    <property type="entry name" value="Ribosomal_bL28/bL31-like_sf"/>
</dbReference>
<dbReference type="InterPro" id="IPR002150">
    <property type="entry name" value="Ribosomal_bL31"/>
</dbReference>
<dbReference type="InterPro" id="IPR027491">
    <property type="entry name" value="Ribosomal_bL31_A"/>
</dbReference>
<dbReference type="InterPro" id="IPR042105">
    <property type="entry name" value="Ribosomal_bL31_sf"/>
</dbReference>
<dbReference type="NCBIfam" id="TIGR00105">
    <property type="entry name" value="L31"/>
    <property type="match status" value="1"/>
</dbReference>
<dbReference type="NCBIfam" id="NF000612">
    <property type="entry name" value="PRK00019.1"/>
    <property type="match status" value="1"/>
</dbReference>
<dbReference type="NCBIfam" id="NF001809">
    <property type="entry name" value="PRK00528.1"/>
    <property type="match status" value="1"/>
</dbReference>
<dbReference type="PANTHER" id="PTHR33280">
    <property type="entry name" value="50S RIBOSOMAL PROTEIN L31, CHLOROPLASTIC"/>
    <property type="match status" value="1"/>
</dbReference>
<dbReference type="PANTHER" id="PTHR33280:SF6">
    <property type="entry name" value="LARGE RIBOSOMAL SUBUNIT PROTEIN BL31A"/>
    <property type="match status" value="1"/>
</dbReference>
<dbReference type="Pfam" id="PF01197">
    <property type="entry name" value="Ribosomal_L31"/>
    <property type="match status" value="1"/>
</dbReference>
<dbReference type="PRINTS" id="PR01249">
    <property type="entry name" value="RIBOSOMALL31"/>
</dbReference>
<dbReference type="SUPFAM" id="SSF143800">
    <property type="entry name" value="L28p-like"/>
    <property type="match status" value="1"/>
</dbReference>
<dbReference type="PROSITE" id="PS01143">
    <property type="entry name" value="RIBOSOMAL_L31"/>
    <property type="match status" value="1"/>
</dbReference>
<comment type="function">
    <text evidence="1">Binds the 23S rRNA.</text>
</comment>
<comment type="cofactor">
    <cofactor evidence="1">
        <name>Zn(2+)</name>
        <dbReference type="ChEBI" id="CHEBI:29105"/>
    </cofactor>
    <text evidence="1">Binds 1 zinc ion per subunit.</text>
</comment>
<comment type="subunit">
    <text evidence="1">Part of the 50S ribosomal subunit.</text>
</comment>
<comment type="similarity">
    <text evidence="1">Belongs to the bacterial ribosomal protein bL31 family. Type A subfamily.</text>
</comment>
<proteinExistence type="inferred from homology"/>
<sequence>MKADIHPTYEAIEATCSCGNVIKTRSTLCKPIHLDVCSECHPFYTGKQKVLDTGGRIDRFKQRFGVFGATK</sequence>
<gene>
    <name evidence="1" type="primary">rpmE</name>
    <name type="ordered locus">PLES_54391</name>
</gene>